<reference key="1">
    <citation type="journal article" date="2000" name="Science">
        <title>The genome sequence of Drosophila melanogaster.</title>
        <authorList>
            <person name="Adams M.D."/>
            <person name="Celniker S.E."/>
            <person name="Holt R.A."/>
            <person name="Evans C.A."/>
            <person name="Gocayne J.D."/>
            <person name="Amanatides P.G."/>
            <person name="Scherer S.E."/>
            <person name="Li P.W."/>
            <person name="Hoskins R.A."/>
            <person name="Galle R.F."/>
            <person name="George R.A."/>
            <person name="Lewis S.E."/>
            <person name="Richards S."/>
            <person name="Ashburner M."/>
            <person name="Henderson S.N."/>
            <person name="Sutton G.G."/>
            <person name="Wortman J.R."/>
            <person name="Yandell M.D."/>
            <person name="Zhang Q."/>
            <person name="Chen L.X."/>
            <person name="Brandon R.C."/>
            <person name="Rogers Y.-H.C."/>
            <person name="Blazej R.G."/>
            <person name="Champe M."/>
            <person name="Pfeiffer B.D."/>
            <person name="Wan K.H."/>
            <person name="Doyle C."/>
            <person name="Baxter E.G."/>
            <person name="Helt G."/>
            <person name="Nelson C.R."/>
            <person name="Miklos G.L.G."/>
            <person name="Abril J.F."/>
            <person name="Agbayani A."/>
            <person name="An H.-J."/>
            <person name="Andrews-Pfannkoch C."/>
            <person name="Baldwin D."/>
            <person name="Ballew R.M."/>
            <person name="Basu A."/>
            <person name="Baxendale J."/>
            <person name="Bayraktaroglu L."/>
            <person name="Beasley E.M."/>
            <person name="Beeson K.Y."/>
            <person name="Benos P.V."/>
            <person name="Berman B.P."/>
            <person name="Bhandari D."/>
            <person name="Bolshakov S."/>
            <person name="Borkova D."/>
            <person name="Botchan M.R."/>
            <person name="Bouck J."/>
            <person name="Brokstein P."/>
            <person name="Brottier P."/>
            <person name="Burtis K.C."/>
            <person name="Busam D.A."/>
            <person name="Butler H."/>
            <person name="Cadieu E."/>
            <person name="Center A."/>
            <person name="Chandra I."/>
            <person name="Cherry J.M."/>
            <person name="Cawley S."/>
            <person name="Dahlke C."/>
            <person name="Davenport L.B."/>
            <person name="Davies P."/>
            <person name="de Pablos B."/>
            <person name="Delcher A."/>
            <person name="Deng Z."/>
            <person name="Mays A.D."/>
            <person name="Dew I."/>
            <person name="Dietz S.M."/>
            <person name="Dodson K."/>
            <person name="Doup L.E."/>
            <person name="Downes M."/>
            <person name="Dugan-Rocha S."/>
            <person name="Dunkov B.C."/>
            <person name="Dunn P."/>
            <person name="Durbin K.J."/>
            <person name="Evangelista C.C."/>
            <person name="Ferraz C."/>
            <person name="Ferriera S."/>
            <person name="Fleischmann W."/>
            <person name="Fosler C."/>
            <person name="Gabrielian A.E."/>
            <person name="Garg N.S."/>
            <person name="Gelbart W.M."/>
            <person name="Glasser K."/>
            <person name="Glodek A."/>
            <person name="Gong F."/>
            <person name="Gorrell J.H."/>
            <person name="Gu Z."/>
            <person name="Guan P."/>
            <person name="Harris M."/>
            <person name="Harris N.L."/>
            <person name="Harvey D.A."/>
            <person name="Heiman T.J."/>
            <person name="Hernandez J.R."/>
            <person name="Houck J."/>
            <person name="Hostin D."/>
            <person name="Houston K.A."/>
            <person name="Howland T.J."/>
            <person name="Wei M.-H."/>
            <person name="Ibegwam C."/>
            <person name="Jalali M."/>
            <person name="Kalush F."/>
            <person name="Karpen G.H."/>
            <person name="Ke Z."/>
            <person name="Kennison J.A."/>
            <person name="Ketchum K.A."/>
            <person name="Kimmel B.E."/>
            <person name="Kodira C.D."/>
            <person name="Kraft C.L."/>
            <person name="Kravitz S."/>
            <person name="Kulp D."/>
            <person name="Lai Z."/>
            <person name="Lasko P."/>
            <person name="Lei Y."/>
            <person name="Levitsky A.A."/>
            <person name="Li J.H."/>
            <person name="Li Z."/>
            <person name="Liang Y."/>
            <person name="Lin X."/>
            <person name="Liu X."/>
            <person name="Mattei B."/>
            <person name="McIntosh T.C."/>
            <person name="McLeod M.P."/>
            <person name="McPherson D."/>
            <person name="Merkulov G."/>
            <person name="Milshina N.V."/>
            <person name="Mobarry C."/>
            <person name="Morris J."/>
            <person name="Moshrefi A."/>
            <person name="Mount S.M."/>
            <person name="Moy M."/>
            <person name="Murphy B."/>
            <person name="Murphy L."/>
            <person name="Muzny D.M."/>
            <person name="Nelson D.L."/>
            <person name="Nelson D.R."/>
            <person name="Nelson K.A."/>
            <person name="Nixon K."/>
            <person name="Nusskern D.R."/>
            <person name="Pacleb J.M."/>
            <person name="Palazzolo M."/>
            <person name="Pittman G.S."/>
            <person name="Pan S."/>
            <person name="Pollard J."/>
            <person name="Puri V."/>
            <person name="Reese M.G."/>
            <person name="Reinert K."/>
            <person name="Remington K."/>
            <person name="Saunders R.D.C."/>
            <person name="Scheeler F."/>
            <person name="Shen H."/>
            <person name="Shue B.C."/>
            <person name="Siden-Kiamos I."/>
            <person name="Simpson M."/>
            <person name="Skupski M.P."/>
            <person name="Smith T.J."/>
            <person name="Spier E."/>
            <person name="Spradling A.C."/>
            <person name="Stapleton M."/>
            <person name="Strong R."/>
            <person name="Sun E."/>
            <person name="Svirskas R."/>
            <person name="Tector C."/>
            <person name="Turner R."/>
            <person name="Venter E."/>
            <person name="Wang A.H."/>
            <person name="Wang X."/>
            <person name="Wang Z.-Y."/>
            <person name="Wassarman D.A."/>
            <person name="Weinstock G.M."/>
            <person name="Weissenbach J."/>
            <person name="Williams S.M."/>
            <person name="Woodage T."/>
            <person name="Worley K.C."/>
            <person name="Wu D."/>
            <person name="Yang S."/>
            <person name="Yao Q.A."/>
            <person name="Ye J."/>
            <person name="Yeh R.-F."/>
            <person name="Zaveri J.S."/>
            <person name="Zhan M."/>
            <person name="Zhang G."/>
            <person name="Zhao Q."/>
            <person name="Zheng L."/>
            <person name="Zheng X.H."/>
            <person name="Zhong F.N."/>
            <person name="Zhong W."/>
            <person name="Zhou X."/>
            <person name="Zhu S.C."/>
            <person name="Zhu X."/>
            <person name="Smith H.O."/>
            <person name="Gibbs R.A."/>
            <person name="Myers E.W."/>
            <person name="Rubin G.M."/>
            <person name="Venter J.C."/>
        </authorList>
    </citation>
    <scope>NUCLEOTIDE SEQUENCE [LARGE SCALE GENOMIC DNA]</scope>
    <source>
        <strain>Berkeley</strain>
    </source>
</reference>
<reference key="2">
    <citation type="journal article" date="2002" name="Genome Biol.">
        <title>Annotation of the Drosophila melanogaster euchromatic genome: a systematic review.</title>
        <authorList>
            <person name="Misra S."/>
            <person name="Crosby M.A."/>
            <person name="Mungall C.J."/>
            <person name="Matthews B.B."/>
            <person name="Campbell K.S."/>
            <person name="Hradecky P."/>
            <person name="Huang Y."/>
            <person name="Kaminker J.S."/>
            <person name="Millburn G.H."/>
            <person name="Prochnik S.E."/>
            <person name="Smith C.D."/>
            <person name="Tupy J.L."/>
            <person name="Whitfield E.J."/>
            <person name="Bayraktaroglu L."/>
            <person name="Berman B.P."/>
            <person name="Bettencourt B.R."/>
            <person name="Celniker S.E."/>
            <person name="de Grey A.D.N.J."/>
            <person name="Drysdale R.A."/>
            <person name="Harris N.L."/>
            <person name="Richter J."/>
            <person name="Russo S."/>
            <person name="Schroeder A.J."/>
            <person name="Shu S.Q."/>
            <person name="Stapleton M."/>
            <person name="Yamada C."/>
            <person name="Ashburner M."/>
            <person name="Gelbart W.M."/>
            <person name="Rubin G.M."/>
            <person name="Lewis S.E."/>
        </authorList>
    </citation>
    <scope>GENOME REANNOTATION</scope>
    <source>
        <strain>Berkeley</strain>
    </source>
</reference>
<reference key="3">
    <citation type="journal article" date="2002" name="Genome Biol.">
        <title>A Drosophila full-length cDNA resource.</title>
        <authorList>
            <person name="Stapleton M."/>
            <person name="Carlson J.W."/>
            <person name="Brokstein P."/>
            <person name="Yu C."/>
            <person name="Champe M."/>
            <person name="George R.A."/>
            <person name="Guarin H."/>
            <person name="Kronmiller B."/>
            <person name="Pacleb J.M."/>
            <person name="Park S."/>
            <person name="Wan K.H."/>
            <person name="Rubin G.M."/>
            <person name="Celniker S.E."/>
        </authorList>
    </citation>
    <scope>NUCLEOTIDE SEQUENCE [LARGE SCALE MRNA]</scope>
    <source>
        <strain>Berkeley</strain>
        <tissue>Testis</tissue>
    </source>
</reference>
<reference key="4">
    <citation type="journal article" date="2011" name="PLoS ONE">
        <title>Asrij maintains the stem cell niche and controls differentiation during Drosophila lymph gland hematopoiesis.</title>
        <authorList>
            <person name="Kulkarni V."/>
            <person name="Khadilkar R.J."/>
            <person name="Magadi S.S."/>
            <person name="Srivathsa M.S."/>
            <person name="Inamdar M.S."/>
        </authorList>
    </citation>
    <scope>SUBCELLULAR LOCATION</scope>
    <scope>TISSUE SPECIFICITY</scope>
</reference>
<reference key="5">
    <citation type="journal article" date="2014" name="Proc. Natl. Acad. Sci. U.S.A.">
        <title>ARF1-GTP regulates Asrij to provide endocytic control of Drosophila blood cell homeostasis.</title>
        <authorList>
            <person name="Khadilkar R.J."/>
            <person name="Rodrigues D."/>
            <person name="Mote R.D."/>
            <person name="Sinha A.R."/>
            <person name="Kulkarni V."/>
            <person name="Magadi S.S."/>
            <person name="Inamdar M.S."/>
        </authorList>
    </citation>
    <scope>FUNCTION</scope>
    <scope>SUBUNIT</scope>
</reference>
<evidence type="ECO:0000250" key="1">
    <source>
        <dbReference type="UniProtKB" id="Q9CRD0"/>
    </source>
</evidence>
<evidence type="ECO:0000256" key="2">
    <source>
        <dbReference type="SAM" id="MobiDB-lite"/>
    </source>
</evidence>
<evidence type="ECO:0000269" key="3">
    <source>
    </source>
</evidence>
<evidence type="ECO:0000269" key="4">
    <source>
    </source>
</evidence>
<evidence type="ECO:0000303" key="5">
    <source>
    </source>
</evidence>
<evidence type="ECO:0000305" key="6"/>
<name>OCAD1_DROME</name>
<sequence>MDSPLNDGSHHPPPHAPHPLADYQFSAEEVKALRECNTESFFQRSLPFGTGLGLLAYFGVKNGYLQGHVKYGAVPKVVMGVILGYFVGKFSYQQKCAEKIMRLPNSHLGELLRQRRQGGGVISSITPDENLGRAFTLAPFSPSSADVYSDEAYQPGRSTSLNLDTESRPTLSGLDDIYRPTLDSGSMLEAELPLEPSKPGQSYEDLRRRNREEYSKHQQSPYSRPYEPPVAVQQRPVEQAQSEPAGRKNQYGDSWTD</sequence>
<organism>
    <name type="scientific">Drosophila melanogaster</name>
    <name type="common">Fruit fly</name>
    <dbReference type="NCBI Taxonomy" id="7227"/>
    <lineage>
        <taxon>Eukaryota</taxon>
        <taxon>Metazoa</taxon>
        <taxon>Ecdysozoa</taxon>
        <taxon>Arthropoda</taxon>
        <taxon>Hexapoda</taxon>
        <taxon>Insecta</taxon>
        <taxon>Pterygota</taxon>
        <taxon>Neoptera</taxon>
        <taxon>Endopterygota</taxon>
        <taxon>Diptera</taxon>
        <taxon>Brachycera</taxon>
        <taxon>Muscomorpha</taxon>
        <taxon>Ephydroidea</taxon>
        <taxon>Drosophilidae</taxon>
        <taxon>Drosophila</taxon>
        <taxon>Sophophora</taxon>
    </lineage>
</organism>
<proteinExistence type="evidence at protein level"/>
<comment type="function">
    <text evidence="3 4">Maintains stem cell potency (PubMed:24707047). Involved in endocytic pathways that mediate signaling during hematopoiesis (PubMed:22110713, PubMed:24707047).</text>
</comment>
<comment type="subunit">
    <text evidence="4">Interacts with STAT3 and ARF1 (PubMed:24707047).</text>
</comment>
<comment type="subcellular location">
    <subcellularLocation>
        <location evidence="3">Endosome</location>
    </subcellularLocation>
</comment>
<comment type="tissue specificity">
    <text evidence="3">Expressed in all cells of the primary lymph gland lobe.</text>
</comment>
<comment type="miscellaneous">
    <text evidence="5">Marker for all hemocyte lineages during development.</text>
</comment>
<comment type="miscellaneous">
    <text>'Asrij' stands for 'blood' in Sanskrit as this protein is strongly expressed in blood vessels.</text>
</comment>
<comment type="similarity">
    <text evidence="6">Belongs to the OCIAD1 family.</text>
</comment>
<keyword id="KW-0967">Endosome</keyword>
<keyword id="KW-1185">Reference proteome</keyword>
<gene>
    <name type="primary">asrij</name>
    <name type="ORF">CG13533</name>
</gene>
<accession>Q9W1X9</accession>
<dbReference type="EMBL" id="AE013599">
    <property type="protein sequence ID" value="AAF46923.1"/>
    <property type="molecule type" value="Genomic_DNA"/>
</dbReference>
<dbReference type="EMBL" id="AY089314">
    <property type="protein sequence ID" value="AAL90052.1"/>
    <property type="molecule type" value="mRNA"/>
</dbReference>
<dbReference type="RefSeq" id="NP_611733.1">
    <property type="nucleotide sequence ID" value="NM_137889.3"/>
</dbReference>
<dbReference type="BioGRID" id="63248">
    <property type="interactions" value="5"/>
</dbReference>
<dbReference type="FunCoup" id="Q9W1X9">
    <property type="interactions" value="2082"/>
</dbReference>
<dbReference type="IntAct" id="Q9W1X9">
    <property type="interactions" value="3"/>
</dbReference>
<dbReference type="STRING" id="7227.FBpp0305129"/>
<dbReference type="PaxDb" id="7227-FBpp0305129"/>
<dbReference type="DNASU" id="37637"/>
<dbReference type="EnsemblMetazoa" id="FBtr0071902">
    <property type="protein sequence ID" value="FBpp0071813"/>
    <property type="gene ID" value="FBgn0034793"/>
</dbReference>
<dbReference type="GeneID" id="37637"/>
<dbReference type="KEGG" id="dme:Dmel_CG13533"/>
<dbReference type="UCSC" id="CG13533-RA">
    <property type="organism name" value="d. melanogaster"/>
</dbReference>
<dbReference type="AGR" id="FB:FBgn0034793"/>
<dbReference type="CTD" id="37637"/>
<dbReference type="FlyBase" id="FBgn0034793">
    <property type="gene designation" value="asrij"/>
</dbReference>
<dbReference type="VEuPathDB" id="VectorBase:FBgn0034793"/>
<dbReference type="eggNOG" id="ENOG502RXQR">
    <property type="taxonomic scope" value="Eukaryota"/>
</dbReference>
<dbReference type="GeneTree" id="ENSGT00530000063690"/>
<dbReference type="HOGENOM" id="CLU_083038_0_0_1"/>
<dbReference type="InParanoid" id="Q9W1X9"/>
<dbReference type="OrthoDB" id="6513616at2759"/>
<dbReference type="PhylomeDB" id="Q9W1X9"/>
<dbReference type="BioGRID-ORCS" id="37637">
    <property type="hits" value="0 hits in 3 CRISPR screens"/>
</dbReference>
<dbReference type="GenomeRNAi" id="37637"/>
<dbReference type="PRO" id="PR:Q9W1X9"/>
<dbReference type="Proteomes" id="UP000000803">
    <property type="component" value="Chromosome 2R"/>
</dbReference>
<dbReference type="Bgee" id="FBgn0034793">
    <property type="expression patterns" value="Expressed in spermatocyte in testis and 154 other cell types or tissues"/>
</dbReference>
<dbReference type="ExpressionAtlas" id="Q9W1X9">
    <property type="expression patterns" value="baseline and differential"/>
</dbReference>
<dbReference type="GO" id="GO:0005769">
    <property type="term" value="C:early endosome"/>
    <property type="evidence" value="ECO:0000314"/>
    <property type="project" value="FlyBase"/>
</dbReference>
<dbReference type="GO" id="GO:0005768">
    <property type="term" value="C:endosome"/>
    <property type="evidence" value="ECO:0000314"/>
    <property type="project" value="FlyBase"/>
</dbReference>
<dbReference type="GO" id="GO:0005794">
    <property type="term" value="C:Golgi apparatus"/>
    <property type="evidence" value="ECO:0000314"/>
    <property type="project" value="FlyBase"/>
</dbReference>
<dbReference type="GO" id="GO:0005764">
    <property type="term" value="C:lysosome"/>
    <property type="evidence" value="ECO:0000314"/>
    <property type="project" value="FlyBase"/>
</dbReference>
<dbReference type="GO" id="GO:0016020">
    <property type="term" value="C:membrane"/>
    <property type="evidence" value="ECO:0000255"/>
    <property type="project" value="FlyBase"/>
</dbReference>
<dbReference type="GO" id="GO:0005739">
    <property type="term" value="C:mitochondrion"/>
    <property type="evidence" value="ECO:0000314"/>
    <property type="project" value="FlyBase"/>
</dbReference>
<dbReference type="GO" id="GO:0055037">
    <property type="term" value="C:recycling endosome"/>
    <property type="evidence" value="ECO:0000314"/>
    <property type="project" value="FlyBase"/>
</dbReference>
<dbReference type="GO" id="GO:0035162">
    <property type="term" value="P:embryonic hemopoiesis"/>
    <property type="evidence" value="ECO:0000270"/>
    <property type="project" value="FlyBase"/>
</dbReference>
<dbReference type="GO" id="GO:0006897">
    <property type="term" value="P:endocytosis"/>
    <property type="evidence" value="ECO:0000315"/>
    <property type="project" value="FlyBase"/>
</dbReference>
<dbReference type="GO" id="GO:0061484">
    <property type="term" value="P:hematopoietic stem cell homeostasis"/>
    <property type="evidence" value="ECO:0000315"/>
    <property type="project" value="FlyBase"/>
</dbReference>
<dbReference type="GO" id="GO:0035170">
    <property type="term" value="P:lymph gland crystal cell differentiation"/>
    <property type="evidence" value="ECO:0000315"/>
    <property type="project" value="FlyBase"/>
</dbReference>
<dbReference type="GO" id="GO:0046427">
    <property type="term" value="P:positive regulation of receptor signaling pathway via JAK-STAT"/>
    <property type="evidence" value="ECO:0000315"/>
    <property type="project" value="FlyBase"/>
</dbReference>
<dbReference type="GO" id="GO:0002786">
    <property type="term" value="P:regulation of antibacterial peptide production"/>
    <property type="evidence" value="ECO:0000315"/>
    <property type="project" value="FlyBase"/>
</dbReference>
<dbReference type="GO" id="GO:0010821">
    <property type="term" value="P:regulation of mitochondrion organization"/>
    <property type="evidence" value="ECO:0000315"/>
    <property type="project" value="FlyBase"/>
</dbReference>
<dbReference type="GO" id="GO:2000736">
    <property type="term" value="P:regulation of stem cell differentiation"/>
    <property type="evidence" value="ECO:0000250"/>
    <property type="project" value="UniProtKB"/>
</dbReference>
<dbReference type="InterPro" id="IPR040187">
    <property type="entry name" value="OCAD1/2"/>
</dbReference>
<dbReference type="InterPro" id="IPR009764">
    <property type="entry name" value="OCIA_dom"/>
</dbReference>
<dbReference type="PANTHER" id="PTHR13336:SF3">
    <property type="entry name" value="OCIA DOMAIN-CONTAINING PROTEIN 1"/>
    <property type="match status" value="1"/>
</dbReference>
<dbReference type="PANTHER" id="PTHR13336">
    <property type="entry name" value="OVARIAN CARCINOMA IMMUNOREACTIVE ANTIGEN"/>
    <property type="match status" value="1"/>
</dbReference>
<dbReference type="Pfam" id="PF07051">
    <property type="entry name" value="OCIA"/>
    <property type="match status" value="1"/>
</dbReference>
<protein>
    <recommendedName>
        <fullName>OCIA domain-containing protein 1</fullName>
        <shortName evidence="1">OCAD1</shortName>
    </recommendedName>
</protein>
<feature type="chain" id="PRO_0000299389" description="OCIA domain-containing protein 1">
    <location>
        <begin position="1"/>
        <end position="257"/>
    </location>
</feature>
<feature type="domain" description="OCIA">
    <location>
        <begin position="1"/>
        <end position="110"/>
    </location>
</feature>
<feature type="region of interest" description="Disordered" evidence="2">
    <location>
        <begin position="1"/>
        <end position="20"/>
    </location>
</feature>
<feature type="region of interest" description="Disordered" evidence="2">
    <location>
        <begin position="148"/>
        <end position="257"/>
    </location>
</feature>
<feature type="compositionally biased region" description="Polar residues" evidence="2">
    <location>
        <begin position="156"/>
        <end position="170"/>
    </location>
</feature>
<feature type="compositionally biased region" description="Basic and acidic residues" evidence="2">
    <location>
        <begin position="204"/>
        <end position="216"/>
    </location>
</feature>